<reference key="1">
    <citation type="journal article" date="2005" name="Nat. Genet.">
        <title>The complete genome sequence of Francisella tularensis, the causative agent of tularemia.</title>
        <authorList>
            <person name="Larsson P."/>
            <person name="Oyston P.C.F."/>
            <person name="Chain P."/>
            <person name="Chu M.C."/>
            <person name="Duffield M."/>
            <person name="Fuxelius H.-H."/>
            <person name="Garcia E."/>
            <person name="Haelltorp G."/>
            <person name="Johansson D."/>
            <person name="Isherwood K.E."/>
            <person name="Karp P.D."/>
            <person name="Larsson E."/>
            <person name="Liu Y."/>
            <person name="Michell S."/>
            <person name="Prior J."/>
            <person name="Prior R."/>
            <person name="Malfatti S."/>
            <person name="Sjoestedt A."/>
            <person name="Svensson K."/>
            <person name="Thompson N."/>
            <person name="Vergez L."/>
            <person name="Wagg J.K."/>
            <person name="Wren B.W."/>
            <person name="Lindler L.E."/>
            <person name="Andersson S.G.E."/>
            <person name="Forsman M."/>
            <person name="Titball R.W."/>
        </authorList>
    </citation>
    <scope>NUCLEOTIDE SEQUENCE [LARGE SCALE GENOMIC DNA]</scope>
    <source>
        <strain>SCHU S4 / Schu 4</strain>
    </source>
</reference>
<accession>Q5NFM8</accession>
<proteinExistence type="inferred from homology"/>
<dbReference type="EMBL" id="AJ749949">
    <property type="protein sequence ID" value="CAG45838.1"/>
    <property type="molecule type" value="Genomic_DNA"/>
</dbReference>
<dbReference type="RefSeq" id="WP_003021460.1">
    <property type="nucleotide sequence ID" value="NC_006570.2"/>
</dbReference>
<dbReference type="RefSeq" id="YP_170164.1">
    <property type="nucleotide sequence ID" value="NC_006570.2"/>
</dbReference>
<dbReference type="SMR" id="Q5NFM8"/>
<dbReference type="STRING" id="177416.FTT_1205"/>
<dbReference type="DNASU" id="3192517"/>
<dbReference type="EnsemblBacteria" id="CAG45838">
    <property type="protein sequence ID" value="CAG45838"/>
    <property type="gene ID" value="FTT_1205"/>
</dbReference>
<dbReference type="KEGG" id="ftu:FTT_1205"/>
<dbReference type="eggNOG" id="COG0445">
    <property type="taxonomic scope" value="Bacteria"/>
</dbReference>
<dbReference type="OrthoDB" id="9815560at2"/>
<dbReference type="Proteomes" id="UP000001174">
    <property type="component" value="Chromosome"/>
</dbReference>
<dbReference type="GO" id="GO:0005829">
    <property type="term" value="C:cytosol"/>
    <property type="evidence" value="ECO:0007669"/>
    <property type="project" value="TreeGrafter"/>
</dbReference>
<dbReference type="GO" id="GO:0050660">
    <property type="term" value="F:flavin adenine dinucleotide binding"/>
    <property type="evidence" value="ECO:0007669"/>
    <property type="project" value="UniProtKB-UniRule"/>
</dbReference>
<dbReference type="GO" id="GO:0030488">
    <property type="term" value="P:tRNA methylation"/>
    <property type="evidence" value="ECO:0007669"/>
    <property type="project" value="TreeGrafter"/>
</dbReference>
<dbReference type="GO" id="GO:0002098">
    <property type="term" value="P:tRNA wobble uridine modification"/>
    <property type="evidence" value="ECO:0007669"/>
    <property type="project" value="InterPro"/>
</dbReference>
<dbReference type="FunFam" id="1.10.10.1800:FF:000001">
    <property type="entry name" value="tRNA uridine 5-carboxymethylaminomethyl modification enzyme MnmG"/>
    <property type="match status" value="1"/>
</dbReference>
<dbReference type="FunFam" id="1.10.150.570:FF:000001">
    <property type="entry name" value="tRNA uridine 5-carboxymethylaminomethyl modification enzyme MnmG"/>
    <property type="match status" value="1"/>
</dbReference>
<dbReference type="FunFam" id="3.50.50.60:FF:000002">
    <property type="entry name" value="tRNA uridine 5-carboxymethylaminomethyl modification enzyme MnmG"/>
    <property type="match status" value="1"/>
</dbReference>
<dbReference type="FunFam" id="3.50.50.60:FF:000010">
    <property type="entry name" value="tRNA uridine 5-carboxymethylaminomethyl modification enzyme MnmG"/>
    <property type="match status" value="1"/>
</dbReference>
<dbReference type="Gene3D" id="3.50.50.60">
    <property type="entry name" value="FAD/NAD(P)-binding domain"/>
    <property type="match status" value="2"/>
</dbReference>
<dbReference type="Gene3D" id="1.10.150.570">
    <property type="entry name" value="GidA associated domain, C-terminal subdomain"/>
    <property type="match status" value="1"/>
</dbReference>
<dbReference type="Gene3D" id="1.10.10.1800">
    <property type="entry name" value="tRNA uridine 5-carboxymethylaminomethyl modification enzyme MnmG/GidA"/>
    <property type="match status" value="1"/>
</dbReference>
<dbReference type="HAMAP" id="MF_00129">
    <property type="entry name" value="MnmG_GidA"/>
    <property type="match status" value="1"/>
</dbReference>
<dbReference type="InterPro" id="IPR036188">
    <property type="entry name" value="FAD/NAD-bd_sf"/>
</dbReference>
<dbReference type="InterPro" id="IPR049312">
    <property type="entry name" value="GIDA_C_N"/>
</dbReference>
<dbReference type="InterPro" id="IPR004416">
    <property type="entry name" value="MnmG"/>
</dbReference>
<dbReference type="InterPro" id="IPR002218">
    <property type="entry name" value="MnmG-rel"/>
</dbReference>
<dbReference type="InterPro" id="IPR020595">
    <property type="entry name" value="MnmG-rel_CS"/>
</dbReference>
<dbReference type="InterPro" id="IPR026904">
    <property type="entry name" value="MnmG_C"/>
</dbReference>
<dbReference type="InterPro" id="IPR047001">
    <property type="entry name" value="MnmG_C_subdom"/>
</dbReference>
<dbReference type="InterPro" id="IPR044920">
    <property type="entry name" value="MnmG_C_subdom_sf"/>
</dbReference>
<dbReference type="InterPro" id="IPR040131">
    <property type="entry name" value="MnmG_N"/>
</dbReference>
<dbReference type="NCBIfam" id="TIGR00136">
    <property type="entry name" value="mnmG_gidA"/>
    <property type="match status" value="1"/>
</dbReference>
<dbReference type="PANTHER" id="PTHR11806">
    <property type="entry name" value="GLUCOSE INHIBITED DIVISION PROTEIN A"/>
    <property type="match status" value="1"/>
</dbReference>
<dbReference type="PANTHER" id="PTHR11806:SF0">
    <property type="entry name" value="PROTEIN MTO1 HOMOLOG, MITOCHONDRIAL"/>
    <property type="match status" value="1"/>
</dbReference>
<dbReference type="Pfam" id="PF01134">
    <property type="entry name" value="GIDA"/>
    <property type="match status" value="1"/>
</dbReference>
<dbReference type="Pfam" id="PF21680">
    <property type="entry name" value="GIDA_C_1st"/>
    <property type="match status" value="1"/>
</dbReference>
<dbReference type="Pfam" id="PF13932">
    <property type="entry name" value="SAM_GIDA_C"/>
    <property type="match status" value="1"/>
</dbReference>
<dbReference type="SMART" id="SM01228">
    <property type="entry name" value="GIDA_assoc_3"/>
    <property type="match status" value="1"/>
</dbReference>
<dbReference type="SUPFAM" id="SSF51905">
    <property type="entry name" value="FAD/NAD(P)-binding domain"/>
    <property type="match status" value="1"/>
</dbReference>
<dbReference type="PROSITE" id="PS01280">
    <property type="entry name" value="GIDA_1"/>
    <property type="match status" value="1"/>
</dbReference>
<organism>
    <name type="scientific">Francisella tularensis subsp. tularensis (strain SCHU S4 / Schu 4)</name>
    <dbReference type="NCBI Taxonomy" id="177416"/>
    <lineage>
        <taxon>Bacteria</taxon>
        <taxon>Pseudomonadati</taxon>
        <taxon>Pseudomonadota</taxon>
        <taxon>Gammaproteobacteria</taxon>
        <taxon>Thiotrichales</taxon>
        <taxon>Francisellaceae</taxon>
        <taxon>Francisella</taxon>
    </lineage>
</organism>
<evidence type="ECO:0000255" key="1">
    <source>
        <dbReference type="HAMAP-Rule" id="MF_00129"/>
    </source>
</evidence>
<sequence>MIYDYGYDVIVVGGGHAGVEAASASARIGAKTLLLTHNIDTIGQMSCNPAIGGIGKGHLVKEIDAMGGVMAKAIDMAGIQFRILNSRKGPAVRATRAQADRLLYKKAINSLINNQENLDIFQDSVDDLVVENNTVCGAITKTGITFRAKKVVLTVGTFLGGKIHIGKVSNAGGRAGDQPSNALAARLRSLPFRVDRLKTGTPPRIDRRSVDFSVMEVQHGDNPTPYFSFFSKGKIEHPRQIPCYITYTNNETHKIITDNLDKSAMYSGLIEGIGPRYCPSIEDKVVRFADKERHQIFVEPEGLNSIELYPNGLSTSLPFEVQCNYIRSIKGFEKAFIMRPGYAIEYDFFDPRDLKPTLETKHIKNLYFAGQINGTTGYEEAGAQGLVASINAAISIDSDKSWYPTRADSYIGVLIDDLITKGTKEPYRMFTSRAEYRLILREDNADLRLSNKACELGLLSKEDQQHFISKKNAIIENIAMMKNTWIGPQTQKARDLEKFLDKKMTRESTLFDLLKRPEIDYSKLQQISELNLNLQDDAVIEQIEISAKYSGYIERQNKDIEKTATFEQKAIPTDFNYSQVKGLSNEVLQKLTEQKPTTLGEASRIPGITPAAISLLTIYMKKTGFIK</sequence>
<protein>
    <recommendedName>
        <fullName evidence="1">tRNA uridine 5-carboxymethylaminomethyl modification enzyme MnmG</fullName>
    </recommendedName>
    <alternativeName>
        <fullName evidence="1">Glucose-inhibited division protein A</fullName>
    </alternativeName>
</protein>
<feature type="chain" id="PRO_0000117102" description="tRNA uridine 5-carboxymethylaminomethyl modification enzyme MnmG">
    <location>
        <begin position="1"/>
        <end position="627"/>
    </location>
</feature>
<feature type="binding site" evidence="1">
    <location>
        <begin position="13"/>
        <end position="18"/>
    </location>
    <ligand>
        <name>FAD</name>
        <dbReference type="ChEBI" id="CHEBI:57692"/>
    </ligand>
</feature>
<feature type="binding site" evidence="1">
    <location>
        <position position="125"/>
    </location>
    <ligand>
        <name>FAD</name>
        <dbReference type="ChEBI" id="CHEBI:57692"/>
    </ligand>
</feature>
<feature type="binding site" evidence="1">
    <location>
        <position position="180"/>
    </location>
    <ligand>
        <name>FAD</name>
        <dbReference type="ChEBI" id="CHEBI:57692"/>
    </ligand>
</feature>
<feature type="binding site" evidence="1">
    <location>
        <begin position="274"/>
        <end position="288"/>
    </location>
    <ligand>
        <name>NAD(+)</name>
        <dbReference type="ChEBI" id="CHEBI:57540"/>
    </ligand>
</feature>
<feature type="binding site" evidence="1">
    <location>
        <position position="371"/>
    </location>
    <ligand>
        <name>FAD</name>
        <dbReference type="ChEBI" id="CHEBI:57692"/>
    </ligand>
</feature>
<comment type="function">
    <text evidence="1">NAD-binding protein involved in the addition of a carboxymethylaminomethyl (cmnm) group at the wobble position (U34) of certain tRNAs, forming tRNA-cmnm(5)s(2)U34.</text>
</comment>
<comment type="cofactor">
    <cofactor evidence="1">
        <name>FAD</name>
        <dbReference type="ChEBI" id="CHEBI:57692"/>
    </cofactor>
</comment>
<comment type="subunit">
    <text evidence="1">Homodimer. Heterotetramer of two MnmE and two MnmG subunits.</text>
</comment>
<comment type="subcellular location">
    <subcellularLocation>
        <location evidence="1">Cytoplasm</location>
    </subcellularLocation>
</comment>
<comment type="similarity">
    <text evidence="1">Belongs to the MnmG family.</text>
</comment>
<keyword id="KW-0963">Cytoplasm</keyword>
<keyword id="KW-0274">FAD</keyword>
<keyword id="KW-0285">Flavoprotein</keyword>
<keyword id="KW-0520">NAD</keyword>
<keyword id="KW-1185">Reference proteome</keyword>
<keyword id="KW-0819">tRNA processing</keyword>
<gene>
    <name evidence="1" type="primary">mnmG</name>
    <name evidence="1" type="synonym">gidA</name>
    <name type="ordered locus">FTT_1205</name>
</gene>
<name>MNMG_FRATT</name>